<feature type="chain" id="PRO_0000336680" description="Probable nicotinate-nucleotide adenylyltransferase">
    <location>
        <begin position="1"/>
        <end position="196"/>
    </location>
</feature>
<organism>
    <name type="scientific">Caldicellulosiruptor saccharolyticus (strain ATCC 43494 / DSM 8903 / Tp8T 6331)</name>
    <dbReference type="NCBI Taxonomy" id="351627"/>
    <lineage>
        <taxon>Bacteria</taxon>
        <taxon>Bacillati</taxon>
        <taxon>Bacillota</taxon>
        <taxon>Bacillota incertae sedis</taxon>
        <taxon>Caldicellulosiruptorales</taxon>
        <taxon>Caldicellulosiruptoraceae</taxon>
        <taxon>Caldicellulosiruptor</taxon>
    </lineage>
</organism>
<name>NADD_CALS8</name>
<gene>
    <name evidence="1" type="primary">nadD</name>
    <name type="ordered locus">Csac_1815</name>
</gene>
<keyword id="KW-0067">ATP-binding</keyword>
<keyword id="KW-0520">NAD</keyword>
<keyword id="KW-0547">Nucleotide-binding</keyword>
<keyword id="KW-0548">Nucleotidyltransferase</keyword>
<keyword id="KW-0662">Pyridine nucleotide biosynthesis</keyword>
<keyword id="KW-0808">Transferase</keyword>
<dbReference type="EC" id="2.7.7.18" evidence="1"/>
<dbReference type="EMBL" id="CP000679">
    <property type="protein sequence ID" value="ABP67400.1"/>
    <property type="molecule type" value="Genomic_DNA"/>
</dbReference>
<dbReference type="RefSeq" id="WP_011917334.1">
    <property type="nucleotide sequence ID" value="NC_009437.1"/>
</dbReference>
<dbReference type="SMR" id="A4XKG5"/>
<dbReference type="STRING" id="351627.Csac_1815"/>
<dbReference type="KEGG" id="csc:Csac_1815"/>
<dbReference type="eggNOG" id="COG1057">
    <property type="taxonomic scope" value="Bacteria"/>
</dbReference>
<dbReference type="HOGENOM" id="CLU_069765_3_2_9"/>
<dbReference type="OrthoDB" id="5295945at2"/>
<dbReference type="UniPathway" id="UPA00253">
    <property type="reaction ID" value="UER00332"/>
</dbReference>
<dbReference type="Proteomes" id="UP000000256">
    <property type="component" value="Chromosome"/>
</dbReference>
<dbReference type="GO" id="GO:0005524">
    <property type="term" value="F:ATP binding"/>
    <property type="evidence" value="ECO:0007669"/>
    <property type="project" value="UniProtKB-KW"/>
</dbReference>
<dbReference type="GO" id="GO:0004515">
    <property type="term" value="F:nicotinate-nucleotide adenylyltransferase activity"/>
    <property type="evidence" value="ECO:0007669"/>
    <property type="project" value="UniProtKB-UniRule"/>
</dbReference>
<dbReference type="GO" id="GO:0009435">
    <property type="term" value="P:NAD biosynthetic process"/>
    <property type="evidence" value="ECO:0007669"/>
    <property type="project" value="UniProtKB-UniRule"/>
</dbReference>
<dbReference type="CDD" id="cd02165">
    <property type="entry name" value="NMNAT"/>
    <property type="match status" value="1"/>
</dbReference>
<dbReference type="Gene3D" id="3.40.50.620">
    <property type="entry name" value="HUPs"/>
    <property type="match status" value="1"/>
</dbReference>
<dbReference type="HAMAP" id="MF_00244">
    <property type="entry name" value="NaMN_adenylyltr"/>
    <property type="match status" value="1"/>
</dbReference>
<dbReference type="InterPro" id="IPR004821">
    <property type="entry name" value="Cyt_trans-like"/>
</dbReference>
<dbReference type="InterPro" id="IPR005248">
    <property type="entry name" value="NadD/NMNAT"/>
</dbReference>
<dbReference type="InterPro" id="IPR014729">
    <property type="entry name" value="Rossmann-like_a/b/a_fold"/>
</dbReference>
<dbReference type="NCBIfam" id="TIGR00125">
    <property type="entry name" value="cyt_tran_rel"/>
    <property type="match status" value="1"/>
</dbReference>
<dbReference type="NCBIfam" id="TIGR00482">
    <property type="entry name" value="nicotinate (nicotinamide) nucleotide adenylyltransferase"/>
    <property type="match status" value="1"/>
</dbReference>
<dbReference type="NCBIfam" id="NF000840">
    <property type="entry name" value="PRK00071.1-3"/>
    <property type="match status" value="1"/>
</dbReference>
<dbReference type="PANTHER" id="PTHR39321">
    <property type="entry name" value="NICOTINATE-NUCLEOTIDE ADENYLYLTRANSFERASE-RELATED"/>
    <property type="match status" value="1"/>
</dbReference>
<dbReference type="PANTHER" id="PTHR39321:SF3">
    <property type="entry name" value="PHOSPHOPANTETHEINE ADENYLYLTRANSFERASE"/>
    <property type="match status" value="1"/>
</dbReference>
<dbReference type="Pfam" id="PF01467">
    <property type="entry name" value="CTP_transf_like"/>
    <property type="match status" value="1"/>
</dbReference>
<dbReference type="SUPFAM" id="SSF52374">
    <property type="entry name" value="Nucleotidylyl transferase"/>
    <property type="match status" value="1"/>
</dbReference>
<reference key="1">
    <citation type="submission" date="2007-04" db="EMBL/GenBank/DDBJ databases">
        <title>Genome sequence of the thermophilic hydrogen-producing bacterium Caldicellulosiruptor saccharolyticus DSM 8903.</title>
        <authorList>
            <person name="Copeland A."/>
            <person name="Lucas S."/>
            <person name="Lapidus A."/>
            <person name="Barry K."/>
            <person name="Detter J.C."/>
            <person name="Glavina del Rio T."/>
            <person name="Hammon N."/>
            <person name="Israni S."/>
            <person name="Dalin E."/>
            <person name="Tice H."/>
            <person name="Pitluck S."/>
            <person name="Kiss H."/>
            <person name="Brettin T."/>
            <person name="Bruce D."/>
            <person name="Han C."/>
            <person name="Schmutz J."/>
            <person name="Larimer F."/>
            <person name="Land M."/>
            <person name="Hauser L."/>
            <person name="Kyrpides N."/>
            <person name="Lykidis A."/>
            <person name="van de Werken H.J.G."/>
            <person name="Verhaart M.R.A."/>
            <person name="VanFossen A.L."/>
            <person name="Lewis D.L."/>
            <person name="Nichols J.D."/>
            <person name="Goorissen H.P."/>
            <person name="van Niel E.W.J."/>
            <person name="Stams F.J.M."/>
            <person name="Willquist K.U."/>
            <person name="Ward D.E."/>
            <person name="van der Oost J."/>
            <person name="Kelly R.M."/>
            <person name="Kengen S.M.W."/>
            <person name="Richardson P."/>
        </authorList>
    </citation>
    <scope>NUCLEOTIDE SEQUENCE [LARGE SCALE GENOMIC DNA]</scope>
    <source>
        <strain>ATCC 43494 / DSM 8903 / Tp8T 6331</strain>
    </source>
</reference>
<sequence>MKVAIFGGTFNPIHIGHLIMAQYVKNFSEVDRVIFVPNGVPPHKNVDIALPEDRFEMVKLSIEDNPDFEISDFEIKNKEPSWTINTLNYFATSYEKVYFILGSDNLFEIIKWYRAEEILKKFPIIVLPRERNTTLIRRQIEELGIQFSAKMVLIDMPIIDISSTEIRRLIRENKSIRYMVHPKVEEYIIRKGLYKE</sequence>
<proteinExistence type="inferred from homology"/>
<comment type="function">
    <text evidence="1">Catalyzes the reversible adenylation of nicotinate mononucleotide (NaMN) to nicotinic acid adenine dinucleotide (NaAD).</text>
</comment>
<comment type="catalytic activity">
    <reaction evidence="1">
        <text>nicotinate beta-D-ribonucleotide + ATP + H(+) = deamido-NAD(+) + diphosphate</text>
        <dbReference type="Rhea" id="RHEA:22860"/>
        <dbReference type="ChEBI" id="CHEBI:15378"/>
        <dbReference type="ChEBI" id="CHEBI:30616"/>
        <dbReference type="ChEBI" id="CHEBI:33019"/>
        <dbReference type="ChEBI" id="CHEBI:57502"/>
        <dbReference type="ChEBI" id="CHEBI:58437"/>
        <dbReference type="EC" id="2.7.7.18"/>
    </reaction>
</comment>
<comment type="pathway">
    <text evidence="1">Cofactor biosynthesis; NAD(+) biosynthesis; deamido-NAD(+) from nicotinate D-ribonucleotide: step 1/1.</text>
</comment>
<comment type="similarity">
    <text evidence="1">Belongs to the NadD family.</text>
</comment>
<accession>A4XKG5</accession>
<protein>
    <recommendedName>
        <fullName evidence="1">Probable nicotinate-nucleotide adenylyltransferase</fullName>
        <ecNumber evidence="1">2.7.7.18</ecNumber>
    </recommendedName>
    <alternativeName>
        <fullName evidence="1">Deamido-NAD(+) diphosphorylase</fullName>
    </alternativeName>
    <alternativeName>
        <fullName evidence="1">Deamido-NAD(+) pyrophosphorylase</fullName>
    </alternativeName>
    <alternativeName>
        <fullName evidence="1">Nicotinate mononucleotide adenylyltransferase</fullName>
        <shortName evidence="1">NaMN adenylyltransferase</shortName>
    </alternativeName>
</protein>
<evidence type="ECO:0000255" key="1">
    <source>
        <dbReference type="HAMAP-Rule" id="MF_00244"/>
    </source>
</evidence>